<organism>
    <name type="scientific">Chlamydia trachomatis serovar A (strain ATCC VR-571B / DSM 19440 / HAR-13)</name>
    <dbReference type="NCBI Taxonomy" id="315277"/>
    <lineage>
        <taxon>Bacteria</taxon>
        <taxon>Pseudomonadati</taxon>
        <taxon>Chlamydiota</taxon>
        <taxon>Chlamydiia</taxon>
        <taxon>Chlamydiales</taxon>
        <taxon>Chlamydiaceae</taxon>
        <taxon>Chlamydia/Chlamydophila group</taxon>
        <taxon>Chlamydia</taxon>
    </lineage>
</organism>
<evidence type="ECO:0000255" key="1">
    <source>
        <dbReference type="HAMAP-Rule" id="MF_00270"/>
    </source>
</evidence>
<evidence type="ECO:0000305" key="2"/>
<protein>
    <recommendedName>
        <fullName evidence="1">Small ribosomal subunit protein bS18</fullName>
    </recommendedName>
    <alternativeName>
        <fullName evidence="2">30S ribosomal protein S18</fullName>
    </alternativeName>
</protein>
<accession>Q3KKN9</accession>
<keyword id="KW-0687">Ribonucleoprotein</keyword>
<keyword id="KW-0689">Ribosomal protein</keyword>
<keyword id="KW-0694">RNA-binding</keyword>
<keyword id="KW-0699">rRNA-binding</keyword>
<proteinExistence type="inferred from homology"/>
<sequence>MNRPVHNEHRRKRFAKKCPFVSAGWKTIDYKDVTTLKRFITERGKILPRRITGVSSRFQALLAQAVKRARHVGLLPFVGED</sequence>
<feature type="chain" id="PRO_1000003478" description="Small ribosomal subunit protein bS18">
    <location>
        <begin position="1"/>
        <end position="81"/>
    </location>
</feature>
<gene>
    <name evidence="1" type="primary">rpsR</name>
    <name type="ordered locus">CTA_0874</name>
</gene>
<comment type="function">
    <text evidence="1">Binds as a heterodimer with protein bS6 to the central domain of the 16S rRNA, where it helps stabilize the platform of the 30S subunit.</text>
</comment>
<comment type="subunit">
    <text evidence="1">Part of the 30S ribosomal subunit. Forms a tight heterodimer with protein bS6.</text>
</comment>
<comment type="similarity">
    <text evidence="1">Belongs to the bacterial ribosomal protein bS18 family.</text>
</comment>
<name>RS18_CHLTA</name>
<reference key="1">
    <citation type="journal article" date="2005" name="Infect. Immun.">
        <title>Comparative genomic analysis of Chlamydia trachomatis oculotropic and genitotropic strains.</title>
        <authorList>
            <person name="Carlson J.H."/>
            <person name="Porcella S.F."/>
            <person name="McClarty G."/>
            <person name="Caldwell H.D."/>
        </authorList>
    </citation>
    <scope>NUCLEOTIDE SEQUENCE [LARGE SCALE GENOMIC DNA]</scope>
    <source>
        <strain>ATCC VR-571B / DSM 19440 / HAR-13</strain>
    </source>
</reference>
<dbReference type="EMBL" id="CP000051">
    <property type="protein sequence ID" value="AAX51083.1"/>
    <property type="molecule type" value="Genomic_DNA"/>
</dbReference>
<dbReference type="RefSeq" id="WP_009872184.1">
    <property type="nucleotide sequence ID" value="NC_007429.1"/>
</dbReference>
<dbReference type="SMR" id="Q3KKN9"/>
<dbReference type="KEGG" id="cta:CTA_0874"/>
<dbReference type="HOGENOM" id="CLU_148710_2_2_0"/>
<dbReference type="Proteomes" id="UP000002532">
    <property type="component" value="Chromosome"/>
</dbReference>
<dbReference type="GO" id="GO:0022627">
    <property type="term" value="C:cytosolic small ribosomal subunit"/>
    <property type="evidence" value="ECO:0007669"/>
    <property type="project" value="TreeGrafter"/>
</dbReference>
<dbReference type="GO" id="GO:0070181">
    <property type="term" value="F:small ribosomal subunit rRNA binding"/>
    <property type="evidence" value="ECO:0007669"/>
    <property type="project" value="TreeGrafter"/>
</dbReference>
<dbReference type="GO" id="GO:0003735">
    <property type="term" value="F:structural constituent of ribosome"/>
    <property type="evidence" value="ECO:0007669"/>
    <property type="project" value="InterPro"/>
</dbReference>
<dbReference type="GO" id="GO:0006412">
    <property type="term" value="P:translation"/>
    <property type="evidence" value="ECO:0007669"/>
    <property type="project" value="UniProtKB-UniRule"/>
</dbReference>
<dbReference type="FunFam" id="4.10.640.10:FF:000004">
    <property type="entry name" value="30S ribosomal protein S18"/>
    <property type="match status" value="1"/>
</dbReference>
<dbReference type="Gene3D" id="4.10.640.10">
    <property type="entry name" value="Ribosomal protein S18"/>
    <property type="match status" value="1"/>
</dbReference>
<dbReference type="HAMAP" id="MF_00270">
    <property type="entry name" value="Ribosomal_bS18"/>
    <property type="match status" value="1"/>
</dbReference>
<dbReference type="InterPro" id="IPR001648">
    <property type="entry name" value="Ribosomal_bS18"/>
</dbReference>
<dbReference type="InterPro" id="IPR018275">
    <property type="entry name" value="Ribosomal_bS18_CS"/>
</dbReference>
<dbReference type="InterPro" id="IPR036870">
    <property type="entry name" value="Ribosomal_bS18_sf"/>
</dbReference>
<dbReference type="NCBIfam" id="TIGR00165">
    <property type="entry name" value="S18"/>
    <property type="match status" value="1"/>
</dbReference>
<dbReference type="PANTHER" id="PTHR13479">
    <property type="entry name" value="30S RIBOSOMAL PROTEIN S18"/>
    <property type="match status" value="1"/>
</dbReference>
<dbReference type="PANTHER" id="PTHR13479:SF40">
    <property type="entry name" value="SMALL RIBOSOMAL SUBUNIT PROTEIN BS18M"/>
    <property type="match status" value="1"/>
</dbReference>
<dbReference type="Pfam" id="PF01084">
    <property type="entry name" value="Ribosomal_S18"/>
    <property type="match status" value="1"/>
</dbReference>
<dbReference type="PRINTS" id="PR00974">
    <property type="entry name" value="RIBOSOMALS18"/>
</dbReference>
<dbReference type="SUPFAM" id="SSF46911">
    <property type="entry name" value="Ribosomal protein S18"/>
    <property type="match status" value="1"/>
</dbReference>
<dbReference type="PROSITE" id="PS00057">
    <property type="entry name" value="RIBOSOMAL_S18"/>
    <property type="match status" value="1"/>
</dbReference>